<sequence>MALLSDLINLNLSDVTEKIIAEYIWIGGSGMDLRSKARTLSGPVSDPHKLPKWNYDGSSTGQAPGEDSEVILYPQAIFKDPFRRGNNILVMCDTYTPAGEPIPTNKRHNAAKIFSHPEVLAEETWYGIEQEYTLLQNSVKWPIGWPVGGYPGPQGPYYCGIGADKAFGRDIVDSHYKACLYAGINISGINGEVMPGQWEFQVGPAVGISAGDELWVARYILERITEIAGVVVSFDPKPIQGDWNGAGAHTNYSTKSMRNDGGYEIIKKAIEKLGLRHKEHIAAYGEGNERRLTGRHETADINTFLWGVANRGASIRVGRDTEKEGKGYFEDRRPASNMDPYVVTSMIAESTILWKP</sequence>
<accession>P51119</accession>
<reference key="1">
    <citation type="journal article" date="1996" name="Plant Mol. Biol.">
        <title>Characterization of Vitis vinifera L. glutamine synthetase and molecular cloning of cDNAs for the cytosolic enzyme.</title>
        <authorList>
            <person name="Loulakakis K.A."/>
            <person name="Roubelakis-Angelakis K.A."/>
        </authorList>
    </citation>
    <scope>NUCLEOTIDE SEQUENCE [MRNA]</scope>
    <source>
        <strain>cv. Sultanina</strain>
        <tissue>Shoot</tissue>
    </source>
</reference>
<comment type="catalytic activity">
    <reaction>
        <text>L-glutamate + NH4(+) + ATP = L-glutamine + ADP + phosphate + H(+)</text>
        <dbReference type="Rhea" id="RHEA:16169"/>
        <dbReference type="ChEBI" id="CHEBI:15378"/>
        <dbReference type="ChEBI" id="CHEBI:28938"/>
        <dbReference type="ChEBI" id="CHEBI:29985"/>
        <dbReference type="ChEBI" id="CHEBI:30616"/>
        <dbReference type="ChEBI" id="CHEBI:43474"/>
        <dbReference type="ChEBI" id="CHEBI:58359"/>
        <dbReference type="ChEBI" id="CHEBI:456216"/>
        <dbReference type="EC" id="6.3.1.2"/>
    </reaction>
</comment>
<comment type="subunit">
    <text evidence="1">Homooctamer.</text>
</comment>
<comment type="subcellular location">
    <subcellularLocation>
        <location>Cytoplasm</location>
    </subcellularLocation>
</comment>
<comment type="similarity">
    <text evidence="4">Belongs to the glutamine synthetase family.</text>
</comment>
<organism>
    <name type="scientific">Vitis vinifera</name>
    <name type="common">Grape</name>
    <dbReference type="NCBI Taxonomy" id="29760"/>
    <lineage>
        <taxon>Eukaryota</taxon>
        <taxon>Viridiplantae</taxon>
        <taxon>Streptophyta</taxon>
        <taxon>Embryophyta</taxon>
        <taxon>Tracheophyta</taxon>
        <taxon>Spermatophyta</taxon>
        <taxon>Magnoliopsida</taxon>
        <taxon>eudicotyledons</taxon>
        <taxon>Gunneridae</taxon>
        <taxon>Pentapetalae</taxon>
        <taxon>rosids</taxon>
        <taxon>Vitales</taxon>
        <taxon>Vitaceae</taxon>
        <taxon>Viteae</taxon>
        <taxon>Vitis</taxon>
    </lineage>
</organism>
<dbReference type="EC" id="6.3.1.2"/>
<dbReference type="EMBL" id="X94321">
    <property type="protein sequence ID" value="CAA63982.1"/>
    <property type="molecule type" value="mRNA"/>
</dbReference>
<dbReference type="PIR" id="S71580">
    <property type="entry name" value="S71580"/>
</dbReference>
<dbReference type="RefSeq" id="NP_001268054.1">
    <property type="nucleotide sequence ID" value="NM_001281125.1"/>
</dbReference>
<dbReference type="SMR" id="P51119"/>
<dbReference type="PaxDb" id="29760-VIT_14s0006g00350.t01"/>
<dbReference type="GeneID" id="100246404"/>
<dbReference type="KEGG" id="vvi:100246404"/>
<dbReference type="eggNOG" id="KOG0683">
    <property type="taxonomic scope" value="Eukaryota"/>
</dbReference>
<dbReference type="OrthoDB" id="726401at71240"/>
<dbReference type="ExpressionAtlas" id="P51119">
    <property type="expression patterns" value="baseline and differential"/>
</dbReference>
<dbReference type="GO" id="GO:0005737">
    <property type="term" value="C:cytoplasm"/>
    <property type="evidence" value="ECO:0007669"/>
    <property type="project" value="UniProtKB-SubCell"/>
</dbReference>
<dbReference type="GO" id="GO:0005524">
    <property type="term" value="F:ATP binding"/>
    <property type="evidence" value="ECO:0007669"/>
    <property type="project" value="UniProtKB-KW"/>
</dbReference>
<dbReference type="GO" id="GO:0004356">
    <property type="term" value="F:glutamine synthetase activity"/>
    <property type="evidence" value="ECO:0007669"/>
    <property type="project" value="UniProtKB-EC"/>
</dbReference>
<dbReference type="GO" id="GO:0006542">
    <property type="term" value="P:glutamine biosynthetic process"/>
    <property type="evidence" value="ECO:0007669"/>
    <property type="project" value="InterPro"/>
</dbReference>
<dbReference type="FunFam" id="3.30.590.10:FF:000004">
    <property type="entry name" value="Glutamine synthetase"/>
    <property type="match status" value="1"/>
</dbReference>
<dbReference type="FunFam" id="3.10.20.70:FF:000003">
    <property type="entry name" value="Glutamine synthetase, chloroplastic"/>
    <property type="match status" value="1"/>
</dbReference>
<dbReference type="Gene3D" id="3.10.20.70">
    <property type="entry name" value="Glutamine synthetase, N-terminal domain"/>
    <property type="match status" value="1"/>
</dbReference>
<dbReference type="Gene3D" id="3.30.590.10">
    <property type="entry name" value="Glutamine synthetase/guanido kinase, catalytic domain"/>
    <property type="match status" value="1"/>
</dbReference>
<dbReference type="InterPro" id="IPR008147">
    <property type="entry name" value="Gln_synt_N"/>
</dbReference>
<dbReference type="InterPro" id="IPR036651">
    <property type="entry name" value="Gln_synt_N_sf"/>
</dbReference>
<dbReference type="InterPro" id="IPR014746">
    <property type="entry name" value="Gln_synth/guanido_kin_cat_dom"/>
</dbReference>
<dbReference type="InterPro" id="IPR008146">
    <property type="entry name" value="Gln_synth_cat_dom"/>
</dbReference>
<dbReference type="InterPro" id="IPR027303">
    <property type="entry name" value="Gln_synth_gly_rich_site"/>
</dbReference>
<dbReference type="InterPro" id="IPR027302">
    <property type="entry name" value="Gln_synth_N_conserv_site"/>
</dbReference>
<dbReference type="InterPro" id="IPR050292">
    <property type="entry name" value="Glutamine_Synthetase"/>
</dbReference>
<dbReference type="PANTHER" id="PTHR20852">
    <property type="entry name" value="GLUTAMINE SYNTHETASE"/>
    <property type="match status" value="1"/>
</dbReference>
<dbReference type="PANTHER" id="PTHR20852:SF93">
    <property type="entry name" value="GLUTAMINE SYNTHETASE CYTOSOLIC ISOZYME 1-1"/>
    <property type="match status" value="1"/>
</dbReference>
<dbReference type="Pfam" id="PF00120">
    <property type="entry name" value="Gln-synt_C"/>
    <property type="match status" value="1"/>
</dbReference>
<dbReference type="Pfam" id="PF03951">
    <property type="entry name" value="Gln-synt_N"/>
    <property type="match status" value="1"/>
</dbReference>
<dbReference type="SMART" id="SM01230">
    <property type="entry name" value="Gln-synt_C"/>
    <property type="match status" value="1"/>
</dbReference>
<dbReference type="SUPFAM" id="SSF54368">
    <property type="entry name" value="Glutamine synthetase, N-terminal domain"/>
    <property type="match status" value="1"/>
</dbReference>
<dbReference type="SUPFAM" id="SSF55931">
    <property type="entry name" value="Glutamine synthetase/guanido kinase"/>
    <property type="match status" value="1"/>
</dbReference>
<dbReference type="PROSITE" id="PS00180">
    <property type="entry name" value="GLNA_1"/>
    <property type="match status" value="1"/>
</dbReference>
<dbReference type="PROSITE" id="PS00181">
    <property type="entry name" value="GLNA_ATP"/>
    <property type="match status" value="1"/>
</dbReference>
<dbReference type="PROSITE" id="PS51986">
    <property type="entry name" value="GS_BETA_GRASP"/>
    <property type="match status" value="1"/>
</dbReference>
<dbReference type="PROSITE" id="PS51987">
    <property type="entry name" value="GS_CATALYTIC"/>
    <property type="match status" value="1"/>
</dbReference>
<protein>
    <recommendedName>
        <fullName>Glutamine synthetase cytosolic isozyme 2</fullName>
        <ecNumber>6.3.1.2</ecNumber>
    </recommendedName>
    <alternativeName>
        <fullName>Glutamate--ammonia ligase</fullName>
    </alternativeName>
</protein>
<gene>
    <name type="primary">GS1-2</name>
    <name type="synonym">GS1;2</name>
</gene>
<feature type="chain" id="PRO_0000153200" description="Glutamine synthetase cytosolic isozyme 2">
    <location>
        <begin position="1"/>
        <end position="356"/>
    </location>
</feature>
<feature type="domain" description="GS beta-grasp" evidence="2">
    <location>
        <begin position="19"/>
        <end position="99"/>
    </location>
</feature>
<feature type="domain" description="GS catalytic" evidence="3">
    <location>
        <begin position="106"/>
        <end position="356"/>
    </location>
</feature>
<keyword id="KW-0067">ATP-binding</keyword>
<keyword id="KW-0963">Cytoplasm</keyword>
<keyword id="KW-0436">Ligase</keyword>
<keyword id="KW-0547">Nucleotide-binding</keyword>
<evidence type="ECO:0000250" key="1"/>
<evidence type="ECO:0000255" key="2">
    <source>
        <dbReference type="PROSITE-ProRule" id="PRU01330"/>
    </source>
</evidence>
<evidence type="ECO:0000255" key="3">
    <source>
        <dbReference type="PROSITE-ProRule" id="PRU01331"/>
    </source>
</evidence>
<evidence type="ECO:0000305" key="4"/>
<name>GLNA2_VITVI</name>
<proteinExistence type="evidence at transcript level"/>